<feature type="chain" id="PRO_0000182050" description="UDP-N-acetylmuramate--L-alanine ligase">
    <location>
        <begin position="1"/>
        <end position="436"/>
    </location>
</feature>
<feature type="binding site" evidence="1">
    <location>
        <begin position="108"/>
        <end position="114"/>
    </location>
    <ligand>
        <name>ATP</name>
        <dbReference type="ChEBI" id="CHEBI:30616"/>
    </ligand>
</feature>
<organism>
    <name type="scientific">Bacillus cereus (strain ZK / E33L)</name>
    <dbReference type="NCBI Taxonomy" id="288681"/>
    <lineage>
        <taxon>Bacteria</taxon>
        <taxon>Bacillati</taxon>
        <taxon>Bacillota</taxon>
        <taxon>Bacilli</taxon>
        <taxon>Bacillales</taxon>
        <taxon>Bacillaceae</taxon>
        <taxon>Bacillus</taxon>
        <taxon>Bacillus cereus group</taxon>
    </lineage>
</organism>
<reference key="1">
    <citation type="journal article" date="2006" name="J. Bacteriol.">
        <title>Pathogenomic sequence analysis of Bacillus cereus and Bacillus thuringiensis isolates closely related to Bacillus anthracis.</title>
        <authorList>
            <person name="Han C.S."/>
            <person name="Xie G."/>
            <person name="Challacombe J.F."/>
            <person name="Altherr M.R."/>
            <person name="Bhotika S.S."/>
            <person name="Bruce D."/>
            <person name="Campbell C.S."/>
            <person name="Campbell M.L."/>
            <person name="Chen J."/>
            <person name="Chertkov O."/>
            <person name="Cleland C."/>
            <person name="Dimitrijevic M."/>
            <person name="Doggett N.A."/>
            <person name="Fawcett J.J."/>
            <person name="Glavina T."/>
            <person name="Goodwin L.A."/>
            <person name="Hill K.K."/>
            <person name="Hitchcock P."/>
            <person name="Jackson P.J."/>
            <person name="Keim P."/>
            <person name="Kewalramani A.R."/>
            <person name="Longmire J."/>
            <person name="Lucas S."/>
            <person name="Malfatti S."/>
            <person name="McMurry K."/>
            <person name="Meincke L.J."/>
            <person name="Misra M."/>
            <person name="Moseman B.L."/>
            <person name="Mundt M."/>
            <person name="Munk A.C."/>
            <person name="Okinaka R.T."/>
            <person name="Parson-Quintana B."/>
            <person name="Reilly L.P."/>
            <person name="Richardson P."/>
            <person name="Robinson D.L."/>
            <person name="Rubin E."/>
            <person name="Saunders E."/>
            <person name="Tapia R."/>
            <person name="Tesmer J.G."/>
            <person name="Thayer N."/>
            <person name="Thompson L.S."/>
            <person name="Tice H."/>
            <person name="Ticknor L.O."/>
            <person name="Wills P.L."/>
            <person name="Brettin T.S."/>
            <person name="Gilna P."/>
        </authorList>
    </citation>
    <scope>NUCLEOTIDE SEQUENCE [LARGE SCALE GENOMIC DNA]</scope>
    <source>
        <strain>ZK / E33L</strain>
    </source>
</reference>
<sequence length="436" mass="49257">MTVYHFVGIKGTGMSSLAQILHDMKHTVQGSDYEKRFFTQTALEKRNISILPFDKSNVKEGQVIIAGNAFPDTHEEIVAAKELNIPVHRYHHFLGDLMNQYTSVAVTGAHGKTSTTGLLAHVMQGAHPTSYLIGDGTGHGVENSKYFVFEACEYRRHFLSYNPDYAIMTNIDFDHPDYFTDINDVFSAFQEMALQVKKGIIACGDDEELQKIQAKVPVIFYGFGEDNDFQARNIQKRTDGTIFDVFVRNTYYDTFKITGYGNHSVLNALAVIALCHYENVDVEAVKHQLTTFEGVKRRFNEKPMGEQVIIDDYAHHPTEINATIEAARQKHPEREIVAVFQPHTFSRTEKFLDEFAESLSKADQVYLCDIFGSARENKGELTIEDLQKRIDGAELITDTTTDVLKKHKNGVLIFMGAGDIQKFEAAYVKEVQVAEK</sequence>
<gene>
    <name evidence="1" type="primary">murC</name>
    <name type="ordered locus">BCE33L4438</name>
</gene>
<proteinExistence type="inferred from homology"/>
<dbReference type="EC" id="6.3.2.8" evidence="1"/>
<dbReference type="EMBL" id="CP000001">
    <property type="protein sequence ID" value="AAU15838.1"/>
    <property type="molecule type" value="Genomic_DNA"/>
</dbReference>
<dbReference type="RefSeq" id="WP_000219465.1">
    <property type="nucleotide sequence ID" value="NZ_CP009968.1"/>
</dbReference>
<dbReference type="SMR" id="Q633A2"/>
<dbReference type="GeneID" id="45024558"/>
<dbReference type="KEGG" id="bcz:BCE33L4438"/>
<dbReference type="PATRIC" id="fig|288681.22.peg.931"/>
<dbReference type="UniPathway" id="UPA00219"/>
<dbReference type="Proteomes" id="UP000002612">
    <property type="component" value="Chromosome"/>
</dbReference>
<dbReference type="GO" id="GO:0005737">
    <property type="term" value="C:cytoplasm"/>
    <property type="evidence" value="ECO:0007669"/>
    <property type="project" value="UniProtKB-SubCell"/>
</dbReference>
<dbReference type="GO" id="GO:0005524">
    <property type="term" value="F:ATP binding"/>
    <property type="evidence" value="ECO:0007669"/>
    <property type="project" value="UniProtKB-UniRule"/>
</dbReference>
<dbReference type="GO" id="GO:0008763">
    <property type="term" value="F:UDP-N-acetylmuramate-L-alanine ligase activity"/>
    <property type="evidence" value="ECO:0007669"/>
    <property type="project" value="UniProtKB-UniRule"/>
</dbReference>
<dbReference type="GO" id="GO:0051301">
    <property type="term" value="P:cell division"/>
    <property type="evidence" value="ECO:0007669"/>
    <property type="project" value="UniProtKB-KW"/>
</dbReference>
<dbReference type="GO" id="GO:0071555">
    <property type="term" value="P:cell wall organization"/>
    <property type="evidence" value="ECO:0007669"/>
    <property type="project" value="UniProtKB-KW"/>
</dbReference>
<dbReference type="GO" id="GO:0009252">
    <property type="term" value="P:peptidoglycan biosynthetic process"/>
    <property type="evidence" value="ECO:0007669"/>
    <property type="project" value="UniProtKB-UniRule"/>
</dbReference>
<dbReference type="GO" id="GO:0008360">
    <property type="term" value="P:regulation of cell shape"/>
    <property type="evidence" value="ECO:0007669"/>
    <property type="project" value="UniProtKB-KW"/>
</dbReference>
<dbReference type="Gene3D" id="3.90.190.20">
    <property type="entry name" value="Mur ligase, C-terminal domain"/>
    <property type="match status" value="1"/>
</dbReference>
<dbReference type="Gene3D" id="3.40.1190.10">
    <property type="entry name" value="Mur-like, catalytic domain"/>
    <property type="match status" value="1"/>
</dbReference>
<dbReference type="Gene3D" id="3.40.50.720">
    <property type="entry name" value="NAD(P)-binding Rossmann-like Domain"/>
    <property type="match status" value="1"/>
</dbReference>
<dbReference type="HAMAP" id="MF_00046">
    <property type="entry name" value="MurC"/>
    <property type="match status" value="1"/>
</dbReference>
<dbReference type="InterPro" id="IPR036565">
    <property type="entry name" value="Mur-like_cat_sf"/>
</dbReference>
<dbReference type="InterPro" id="IPR004101">
    <property type="entry name" value="Mur_ligase_C"/>
</dbReference>
<dbReference type="InterPro" id="IPR036615">
    <property type="entry name" value="Mur_ligase_C_dom_sf"/>
</dbReference>
<dbReference type="InterPro" id="IPR013221">
    <property type="entry name" value="Mur_ligase_cen"/>
</dbReference>
<dbReference type="InterPro" id="IPR000713">
    <property type="entry name" value="Mur_ligase_N"/>
</dbReference>
<dbReference type="InterPro" id="IPR050061">
    <property type="entry name" value="MurCDEF_pg_biosynth"/>
</dbReference>
<dbReference type="InterPro" id="IPR005758">
    <property type="entry name" value="UDP-N-AcMur_Ala_ligase_MurC"/>
</dbReference>
<dbReference type="NCBIfam" id="TIGR01082">
    <property type="entry name" value="murC"/>
    <property type="match status" value="1"/>
</dbReference>
<dbReference type="PANTHER" id="PTHR43445:SF3">
    <property type="entry name" value="UDP-N-ACETYLMURAMATE--L-ALANINE LIGASE"/>
    <property type="match status" value="1"/>
</dbReference>
<dbReference type="PANTHER" id="PTHR43445">
    <property type="entry name" value="UDP-N-ACETYLMURAMATE--L-ALANINE LIGASE-RELATED"/>
    <property type="match status" value="1"/>
</dbReference>
<dbReference type="Pfam" id="PF01225">
    <property type="entry name" value="Mur_ligase"/>
    <property type="match status" value="1"/>
</dbReference>
<dbReference type="Pfam" id="PF02875">
    <property type="entry name" value="Mur_ligase_C"/>
    <property type="match status" value="1"/>
</dbReference>
<dbReference type="Pfam" id="PF08245">
    <property type="entry name" value="Mur_ligase_M"/>
    <property type="match status" value="1"/>
</dbReference>
<dbReference type="SUPFAM" id="SSF51984">
    <property type="entry name" value="MurCD N-terminal domain"/>
    <property type="match status" value="1"/>
</dbReference>
<dbReference type="SUPFAM" id="SSF53623">
    <property type="entry name" value="MurD-like peptide ligases, catalytic domain"/>
    <property type="match status" value="1"/>
</dbReference>
<dbReference type="SUPFAM" id="SSF53244">
    <property type="entry name" value="MurD-like peptide ligases, peptide-binding domain"/>
    <property type="match status" value="1"/>
</dbReference>
<evidence type="ECO:0000255" key="1">
    <source>
        <dbReference type="HAMAP-Rule" id="MF_00046"/>
    </source>
</evidence>
<comment type="function">
    <text evidence="1">Cell wall formation.</text>
</comment>
<comment type="catalytic activity">
    <reaction evidence="1">
        <text>UDP-N-acetyl-alpha-D-muramate + L-alanine + ATP = UDP-N-acetyl-alpha-D-muramoyl-L-alanine + ADP + phosphate + H(+)</text>
        <dbReference type="Rhea" id="RHEA:23372"/>
        <dbReference type="ChEBI" id="CHEBI:15378"/>
        <dbReference type="ChEBI" id="CHEBI:30616"/>
        <dbReference type="ChEBI" id="CHEBI:43474"/>
        <dbReference type="ChEBI" id="CHEBI:57972"/>
        <dbReference type="ChEBI" id="CHEBI:70757"/>
        <dbReference type="ChEBI" id="CHEBI:83898"/>
        <dbReference type="ChEBI" id="CHEBI:456216"/>
        <dbReference type="EC" id="6.3.2.8"/>
    </reaction>
</comment>
<comment type="pathway">
    <text evidence="1">Cell wall biogenesis; peptidoglycan biosynthesis.</text>
</comment>
<comment type="subcellular location">
    <subcellularLocation>
        <location evidence="1">Cytoplasm</location>
    </subcellularLocation>
</comment>
<comment type="similarity">
    <text evidence="1">Belongs to the MurCDEF family.</text>
</comment>
<protein>
    <recommendedName>
        <fullName evidence="1">UDP-N-acetylmuramate--L-alanine ligase</fullName>
        <ecNumber evidence="1">6.3.2.8</ecNumber>
    </recommendedName>
    <alternativeName>
        <fullName evidence="1">UDP-N-acetylmuramoyl-L-alanine synthetase</fullName>
    </alternativeName>
</protein>
<keyword id="KW-0067">ATP-binding</keyword>
<keyword id="KW-0131">Cell cycle</keyword>
<keyword id="KW-0132">Cell division</keyword>
<keyword id="KW-0133">Cell shape</keyword>
<keyword id="KW-0961">Cell wall biogenesis/degradation</keyword>
<keyword id="KW-0963">Cytoplasm</keyword>
<keyword id="KW-0436">Ligase</keyword>
<keyword id="KW-0547">Nucleotide-binding</keyword>
<keyword id="KW-0573">Peptidoglycan synthesis</keyword>
<accession>Q633A2</accession>
<name>MURC_BACCZ</name>